<organism>
    <name type="scientific">Pongo abelii</name>
    <name type="common">Sumatran orangutan</name>
    <name type="synonym">Pongo pygmaeus abelii</name>
    <dbReference type="NCBI Taxonomy" id="9601"/>
    <lineage>
        <taxon>Eukaryota</taxon>
        <taxon>Metazoa</taxon>
        <taxon>Chordata</taxon>
        <taxon>Craniata</taxon>
        <taxon>Vertebrata</taxon>
        <taxon>Euteleostomi</taxon>
        <taxon>Mammalia</taxon>
        <taxon>Eutheria</taxon>
        <taxon>Euarchontoglires</taxon>
        <taxon>Primates</taxon>
        <taxon>Haplorrhini</taxon>
        <taxon>Catarrhini</taxon>
        <taxon>Hominidae</taxon>
        <taxon>Pongo</taxon>
    </lineage>
</organism>
<feature type="chain" id="PRO_0000274558" description="Ankyrin repeat domain-containing protein 27">
    <location>
        <begin position="1"/>
        <end position="1050"/>
    </location>
</feature>
<feature type="domain" description="VPS9" evidence="3">
    <location>
        <begin position="233"/>
        <end position="371"/>
    </location>
</feature>
<feature type="repeat" description="ANK 1">
    <location>
        <begin position="396"/>
        <end position="426"/>
    </location>
</feature>
<feature type="repeat" description="ANK 2">
    <location>
        <begin position="462"/>
        <end position="491"/>
    </location>
</feature>
<feature type="repeat" description="ANK 3">
    <location>
        <begin position="495"/>
        <end position="524"/>
    </location>
</feature>
<feature type="repeat" description="ANK 4">
    <location>
        <begin position="528"/>
        <end position="560"/>
    </location>
</feature>
<feature type="repeat" description="ANK 5">
    <location>
        <begin position="564"/>
        <end position="593"/>
    </location>
</feature>
<feature type="repeat" description="ANK 6">
    <location>
        <begin position="597"/>
        <end position="627"/>
    </location>
</feature>
<feature type="repeat" description="ANK 7">
    <location>
        <begin position="668"/>
        <end position="698"/>
    </location>
</feature>
<feature type="repeat" description="ANK 8">
    <location>
        <begin position="743"/>
        <end position="772"/>
    </location>
</feature>
<feature type="repeat" description="ANK 9">
    <location>
        <begin position="776"/>
        <end position="805"/>
    </location>
</feature>
<feature type="repeat" description="ANK 10">
    <location>
        <begin position="809"/>
        <end position="838"/>
    </location>
</feature>
<feature type="repeat" description="ANK 11">
    <location>
        <begin position="842"/>
        <end position="871"/>
    </location>
</feature>
<feature type="region of interest" description="Sufficient for GEF activity towards RAB21" evidence="2">
    <location>
        <begin position="1"/>
        <end position="372"/>
    </location>
</feature>
<feature type="region of interest" description="Sufficient for interaction with VPS29" evidence="2">
    <location>
        <begin position="396"/>
        <end position="460"/>
    </location>
</feature>
<feature type="region of interest" description="Interaction with RAB32" evidence="1">
    <location>
        <begin position="451"/>
        <end position="730"/>
    </location>
</feature>
<feature type="region of interest" description="Interaction with RAB38" evidence="1 2">
    <location>
        <begin position="451"/>
        <end position="600"/>
    </location>
</feature>
<feature type="region of interest" description="Disordered" evidence="4">
    <location>
        <begin position="630"/>
        <end position="665"/>
    </location>
</feature>
<feature type="region of interest" description="Required for interaction with VAMP7" evidence="1 2">
    <location>
        <begin position="658"/>
        <end position="707"/>
    </location>
</feature>
<feature type="region of interest" description="Sufficient for interaction with VPS29" evidence="2">
    <location>
        <begin position="692"/>
        <end position="746"/>
    </location>
</feature>
<feature type="region of interest" description="Disordered" evidence="4">
    <location>
        <begin position="987"/>
        <end position="1050"/>
    </location>
</feature>
<feature type="compositionally biased region" description="Low complexity" evidence="4">
    <location>
        <begin position="638"/>
        <end position="658"/>
    </location>
</feature>
<feature type="compositionally biased region" description="Basic and acidic residues" evidence="4">
    <location>
        <begin position="994"/>
        <end position="1007"/>
    </location>
</feature>
<feature type="compositionally biased region" description="Polar residues" evidence="4">
    <location>
        <begin position="1040"/>
        <end position="1050"/>
    </location>
</feature>
<feature type="modified residue" description="Phosphoserine" evidence="2">
    <location>
        <position position="962"/>
    </location>
</feature>
<feature type="modified residue" description="Phosphoserine" evidence="2">
    <location>
        <position position="970"/>
    </location>
</feature>
<feature type="modified residue" description="Phosphothreonine" evidence="2">
    <location>
        <position position="1023"/>
    </location>
</feature>
<dbReference type="EMBL" id="CR857395">
    <property type="protein sequence ID" value="CAH89688.1"/>
    <property type="molecule type" value="mRNA"/>
</dbReference>
<dbReference type="RefSeq" id="NP_001124765.1">
    <property type="nucleotide sequence ID" value="NM_001131293.1"/>
</dbReference>
<dbReference type="SMR" id="Q5REW9"/>
<dbReference type="FunCoup" id="Q5REW9">
    <property type="interactions" value="2467"/>
</dbReference>
<dbReference type="STRING" id="9601.ENSPPYP00000010994"/>
<dbReference type="GeneID" id="100171616"/>
<dbReference type="KEGG" id="pon:100171616"/>
<dbReference type="CTD" id="84079"/>
<dbReference type="InParanoid" id="Q5REW9"/>
<dbReference type="OrthoDB" id="411646at2759"/>
<dbReference type="Proteomes" id="UP000001595">
    <property type="component" value="Unplaced"/>
</dbReference>
<dbReference type="GO" id="GO:0030659">
    <property type="term" value="C:cytoplasmic vesicle membrane"/>
    <property type="evidence" value="ECO:0007669"/>
    <property type="project" value="UniProtKB-SubCell"/>
</dbReference>
<dbReference type="GO" id="GO:0005769">
    <property type="term" value="C:early endosome"/>
    <property type="evidence" value="ECO:0007669"/>
    <property type="project" value="UniProtKB-SubCell"/>
</dbReference>
<dbReference type="GO" id="GO:0005770">
    <property type="term" value="C:late endosome"/>
    <property type="evidence" value="ECO:0007669"/>
    <property type="project" value="UniProtKB-SubCell"/>
</dbReference>
<dbReference type="GO" id="GO:0005764">
    <property type="term" value="C:lysosome"/>
    <property type="evidence" value="ECO:0007669"/>
    <property type="project" value="UniProtKB-SubCell"/>
</dbReference>
<dbReference type="GO" id="GO:0042470">
    <property type="term" value="C:melanosome"/>
    <property type="evidence" value="ECO:0007669"/>
    <property type="project" value="UniProtKB-SubCell"/>
</dbReference>
<dbReference type="GO" id="GO:0043005">
    <property type="term" value="C:neuron projection"/>
    <property type="evidence" value="ECO:0007669"/>
    <property type="project" value="TreeGrafter"/>
</dbReference>
<dbReference type="GO" id="GO:0005886">
    <property type="term" value="C:plasma membrane"/>
    <property type="evidence" value="ECO:0007669"/>
    <property type="project" value="UniProtKB-SubCell"/>
</dbReference>
<dbReference type="GO" id="GO:0030133">
    <property type="term" value="C:transport vesicle"/>
    <property type="evidence" value="ECO:0007669"/>
    <property type="project" value="TreeGrafter"/>
</dbReference>
<dbReference type="GO" id="GO:0097422">
    <property type="term" value="C:tubular endosome"/>
    <property type="evidence" value="ECO:0007669"/>
    <property type="project" value="TreeGrafter"/>
</dbReference>
<dbReference type="GO" id="GO:0005085">
    <property type="term" value="F:guanyl-nucleotide exchange factor activity"/>
    <property type="evidence" value="ECO:0007669"/>
    <property type="project" value="TreeGrafter"/>
</dbReference>
<dbReference type="GO" id="GO:0000149">
    <property type="term" value="F:SNARE binding"/>
    <property type="evidence" value="ECO:0007669"/>
    <property type="project" value="TreeGrafter"/>
</dbReference>
<dbReference type="GO" id="GO:0045022">
    <property type="term" value="P:early endosome to late endosome transport"/>
    <property type="evidence" value="ECO:0007669"/>
    <property type="project" value="TreeGrafter"/>
</dbReference>
<dbReference type="GO" id="GO:0048812">
    <property type="term" value="P:neuron projection morphogenesis"/>
    <property type="evidence" value="ECO:0007669"/>
    <property type="project" value="TreeGrafter"/>
</dbReference>
<dbReference type="GO" id="GO:0015031">
    <property type="term" value="P:protein transport"/>
    <property type="evidence" value="ECO:0007669"/>
    <property type="project" value="UniProtKB-KW"/>
</dbReference>
<dbReference type="CDD" id="cd22885">
    <property type="entry name" value="ANKRD27_zf1"/>
    <property type="match status" value="1"/>
</dbReference>
<dbReference type="CDD" id="cd22886">
    <property type="entry name" value="ANKRD27_zf2"/>
    <property type="match status" value="1"/>
</dbReference>
<dbReference type="FunFam" id="1.25.40.20:FF:000065">
    <property type="entry name" value="Ankyrin repeat domain-containing protein 27"/>
    <property type="match status" value="1"/>
</dbReference>
<dbReference type="FunFam" id="1.25.40.20:FF:000087">
    <property type="entry name" value="Ankyrin repeat domain-containing protein 27"/>
    <property type="match status" value="1"/>
</dbReference>
<dbReference type="FunFam" id="1.20.1050.80:FF:000004">
    <property type="entry name" value="ankyrin repeat domain-containing protein 27"/>
    <property type="match status" value="1"/>
</dbReference>
<dbReference type="Gene3D" id="1.25.40.20">
    <property type="entry name" value="Ankyrin repeat-containing domain"/>
    <property type="match status" value="2"/>
</dbReference>
<dbReference type="Gene3D" id="1.20.1050.80">
    <property type="entry name" value="VPS9 domain"/>
    <property type="match status" value="1"/>
</dbReference>
<dbReference type="InterPro" id="IPR002110">
    <property type="entry name" value="Ankyrin_rpt"/>
</dbReference>
<dbReference type="InterPro" id="IPR036770">
    <property type="entry name" value="Ankyrin_rpt-contain_sf"/>
</dbReference>
<dbReference type="InterPro" id="IPR051248">
    <property type="entry name" value="UPF0507/Ank_repeat_27"/>
</dbReference>
<dbReference type="InterPro" id="IPR003123">
    <property type="entry name" value="VPS9"/>
</dbReference>
<dbReference type="InterPro" id="IPR037191">
    <property type="entry name" value="VPS9_dom_sf"/>
</dbReference>
<dbReference type="PANTHER" id="PTHR24170">
    <property type="entry name" value="ANKYRIN REPEAT DOMAIN-CONTAINING PROTEIN 27"/>
    <property type="match status" value="1"/>
</dbReference>
<dbReference type="PANTHER" id="PTHR24170:SF2">
    <property type="entry name" value="ANKYRIN REPEAT DOMAIN-CONTAINING PROTEIN 27"/>
    <property type="match status" value="1"/>
</dbReference>
<dbReference type="Pfam" id="PF00023">
    <property type="entry name" value="Ank"/>
    <property type="match status" value="1"/>
</dbReference>
<dbReference type="Pfam" id="PF12796">
    <property type="entry name" value="Ank_2"/>
    <property type="match status" value="2"/>
</dbReference>
<dbReference type="Pfam" id="PF13637">
    <property type="entry name" value="Ank_4"/>
    <property type="match status" value="1"/>
</dbReference>
<dbReference type="Pfam" id="PF02204">
    <property type="entry name" value="VPS9"/>
    <property type="match status" value="1"/>
</dbReference>
<dbReference type="PRINTS" id="PR01415">
    <property type="entry name" value="ANKYRIN"/>
</dbReference>
<dbReference type="SMART" id="SM00248">
    <property type="entry name" value="ANK"/>
    <property type="match status" value="8"/>
</dbReference>
<dbReference type="SMART" id="SM00167">
    <property type="entry name" value="VPS9"/>
    <property type="match status" value="1"/>
</dbReference>
<dbReference type="SUPFAM" id="SSF48403">
    <property type="entry name" value="Ankyrin repeat"/>
    <property type="match status" value="2"/>
</dbReference>
<dbReference type="SUPFAM" id="SSF109993">
    <property type="entry name" value="VPS9 domain"/>
    <property type="match status" value="1"/>
</dbReference>
<dbReference type="PROSITE" id="PS50297">
    <property type="entry name" value="ANK_REP_REGION"/>
    <property type="match status" value="1"/>
</dbReference>
<dbReference type="PROSITE" id="PS50088">
    <property type="entry name" value="ANK_REPEAT"/>
    <property type="match status" value="8"/>
</dbReference>
<dbReference type="PROSITE" id="PS51205">
    <property type="entry name" value="VPS9"/>
    <property type="match status" value="1"/>
</dbReference>
<evidence type="ECO:0000250" key="1">
    <source>
        <dbReference type="UniProtKB" id="Q3UMR0"/>
    </source>
</evidence>
<evidence type="ECO:0000250" key="2">
    <source>
        <dbReference type="UniProtKB" id="Q96NW4"/>
    </source>
</evidence>
<evidence type="ECO:0000255" key="3">
    <source>
        <dbReference type="PROSITE-ProRule" id="PRU00550"/>
    </source>
</evidence>
<evidence type="ECO:0000256" key="4">
    <source>
        <dbReference type="SAM" id="MobiDB-lite"/>
    </source>
</evidence>
<name>ANR27_PONAB</name>
<accession>Q5REW9</accession>
<protein>
    <recommendedName>
        <fullName>Ankyrin repeat domain-containing protein 27</fullName>
    </recommendedName>
</protein>
<sequence>MALYDEDLLKNPFYLALQKWRPDLCSKVAQIHGIVLVPCKGSLSSSIQSTCQFESYILIPVEEHFQTLNGKDVFIQGNRIKLGAGFTCLLSVPILFEETFYNEKEESFSILCIAHPLEKRESSEEPLAPSDPFSLKTIEDVREFLGRHSERFDRNIASFHRTFRECERKSLRHHIDSANALYTKCLQQLLRDSHLKMLAKQEAQMNLMKQAVEIYVHHEIYDLIFKYVGTMEASEDAAFNKITRSLQDLQQKDIGVKPEFSFNIPRAKRELAQLNKCTSPQQKLVCLRKVVQLITQSPSQRVNLETMCADDLLSVLLYLLVKTEIPNWMANLSYIKNFRFSSSAKDELGYCLTSFEAAIEYIRQGSLSAKPPESEGFGDRLFLKQRMSLLSQMTSSPTDCLFKHIASGNQKEVERLLSQEDHDKDAVQKMCHPLCFCDDCEKLVSGRLNDPSVVTPFSRDDRGHTPLHVAALCGQASLIDLLVSKGAVVNATDYHGATPLHLACQKGYQSVTLLLLHYKASAEVQDNNGNTPLHLACTYGHEDCVKALVYYDVESCRLDIGNEKGDTPLHIAARWGYQAIIETLLQNGASPEIQNRLKETPLKCALNSKILSVMEAYHLSFERRQKSSEAPVQSLQRSVDSISQESSTSSFSSMSAGSRQEETKKDYREVEKLLRAVADGDLEMVRYLLEWTEEDLEDAEDTVSAVDPEFCHPLCQCPKCAPAQKRLAKVPASGLGVNVTSQDGSSPLYVAALHGRADLIPLLLKHGANAGARNADQAVPLHLACQQGHFQVVKCLLDSNAKPNKKDLSGNTPLIYACSGGHHEVVALLLQHGAAINTSNNKGNTALHEAVIEKHVFVVELLLLHGASVQVLNKRQRTAVDCAEQNSKIMELLQVVPSCVASLDDVAETDRKEYVTVKIRKKWNSKLYDLPDEPFTRQFYFAHSAGQFKGKTSREIMARDRSVPNLTEGSLHEPGRQSVTLRQNNLPAQSGSHAAEKGNSDWPERPRVTQTGPGHRRMLRRHTVEDAVVSQGPEAAGPLSTPQEVSASRS</sequence>
<reference key="1">
    <citation type="submission" date="2004-11" db="EMBL/GenBank/DDBJ databases">
        <authorList>
            <consortium name="The German cDNA consortium"/>
        </authorList>
    </citation>
    <scope>NUCLEOTIDE SEQUENCE [LARGE SCALE MRNA]</scope>
    <source>
        <tissue>Kidney</tissue>
    </source>
</reference>
<proteinExistence type="evidence at transcript level"/>
<gene>
    <name type="primary">ANKRD27</name>
</gene>
<keyword id="KW-0040">ANK repeat</keyword>
<keyword id="KW-1003">Cell membrane</keyword>
<keyword id="KW-0968">Cytoplasmic vesicle</keyword>
<keyword id="KW-0967">Endosome</keyword>
<keyword id="KW-0458">Lysosome</keyword>
<keyword id="KW-0472">Membrane</keyword>
<keyword id="KW-0597">Phosphoprotein</keyword>
<keyword id="KW-0653">Protein transport</keyword>
<keyword id="KW-1185">Reference proteome</keyword>
<keyword id="KW-0677">Repeat</keyword>
<keyword id="KW-0813">Transport</keyword>
<comment type="function">
    <text evidence="1 2">May be a guanine exchange factor (GEF) for Rab21, Rab32 and Rab38 and regulate endosome dynamics. May regulate the participation of VAMP7 in membrane fusion events; in vitro inhibits VAMP7-mediated SNARE complex formation by trapping VAMP7 in a closed, fusogenically inactive conformation (By similarity). Involved in peripheral melanosomal distribution of TYRP1 in melanocytes; the function, which probably is implicating vesicle-trafficking, includes cooperation with Rab32, Rab38 and VAMP7. Involved in the regulation of neurite growth; the function seems to require its GEF activity, probably towards Rab21, and VAMP7 but not Rab32/38. Proposed to be involved in Golgi sorting of VAMP7 and transport of VAMP7 vesicles to the cell surface; the function seems to implicate kinesin heavy chain isoform 5 proteins, GOLGA4, RAB21 and MACF1. Required for the colocalization of VAMP7 and Rab21, probably on TGN sites. Involved in GLUT1 endosome-to-plasma membrane trafficking; the function is dependent of association with VPS29. Regulates the proper trafficking of melanogenic enzymes TYR, TYRP1 and DCT/TYRP2 to melanosomes in melanocytes (By similarity).</text>
</comment>
<comment type="subunit">
    <text evidence="2">Interacts with RAB21 (GDP-bound form), VPS29, KIF5A, KIF5C, GOLGA4. Interacts with RAB32 (GTP-bound form), RAB38 (GTP-bound form), VAMP7. Interacts with low affinity with RAB5. ANKRD27:RAB32 heterodimers can homodimerize to form tetramers. Can interact with RAB38 or RAB32, VPS29 and VAMP7 simultaneously (By similarity). A decreased interaction with RAB32 seen in the presence of SGSM2 (By similarity).</text>
</comment>
<comment type="subcellular location">
    <subcellularLocation>
        <location evidence="2">Early endosome</location>
    </subcellularLocation>
    <subcellularLocation>
        <location evidence="2">Late endosome</location>
    </subcellularLocation>
    <subcellularLocation>
        <location evidence="2">Cytoplasmic vesicle membrane</location>
    </subcellularLocation>
    <subcellularLocation>
        <location evidence="2">Lysosome</location>
    </subcellularLocation>
    <subcellularLocation>
        <location evidence="2">Cell membrane</location>
    </subcellularLocation>
    <subcellularLocation>
        <location evidence="1">Melanosome</location>
    </subcellularLocation>
    <text evidence="1">Colocalizes with VAMP7 in transport vesicles in the shaft of hippocampal neurons (By similarity).</text>
</comment>